<feature type="chain" id="PRO_1000081751" description="ATP synthase epsilon chain">
    <location>
        <begin position="1"/>
        <end position="134"/>
    </location>
</feature>
<evidence type="ECO:0000255" key="1">
    <source>
        <dbReference type="HAMAP-Rule" id="MF_00530"/>
    </source>
</evidence>
<keyword id="KW-0066">ATP synthesis</keyword>
<keyword id="KW-1003">Cell membrane</keyword>
<keyword id="KW-0139">CF(1)</keyword>
<keyword id="KW-0375">Hydrogen ion transport</keyword>
<keyword id="KW-0406">Ion transport</keyword>
<keyword id="KW-0472">Membrane</keyword>
<keyword id="KW-0813">Transport</keyword>
<comment type="function">
    <text evidence="1">Produces ATP from ADP in the presence of a proton gradient across the membrane.</text>
</comment>
<comment type="subunit">
    <text evidence="1">F-type ATPases have 2 components, CF(1) - the catalytic core - and CF(0) - the membrane proton channel. CF(1) has five subunits: alpha(3), beta(3), gamma(1), delta(1), epsilon(1). CF(0) has three main subunits: a, b and c.</text>
</comment>
<comment type="subcellular location">
    <subcellularLocation>
        <location evidence="1">Cell membrane</location>
        <topology evidence="1">Peripheral membrane protein</topology>
    </subcellularLocation>
</comment>
<comment type="similarity">
    <text evidence="1">Belongs to the ATPase epsilon chain family.</text>
</comment>
<organism>
    <name type="scientific">Staphylococcus aureus (strain USA300 / TCH1516)</name>
    <dbReference type="NCBI Taxonomy" id="451516"/>
    <lineage>
        <taxon>Bacteria</taxon>
        <taxon>Bacillati</taxon>
        <taxon>Bacillota</taxon>
        <taxon>Bacilli</taxon>
        <taxon>Bacillales</taxon>
        <taxon>Staphylococcaceae</taxon>
        <taxon>Staphylococcus</taxon>
    </lineage>
</organism>
<proteinExistence type="inferred from homology"/>
<dbReference type="EMBL" id="CP000730">
    <property type="protein sequence ID" value="ABX30089.1"/>
    <property type="molecule type" value="Genomic_DNA"/>
</dbReference>
<dbReference type="RefSeq" id="WP_001094394.1">
    <property type="nucleotide sequence ID" value="NC_010079.1"/>
</dbReference>
<dbReference type="SMR" id="A8Z500"/>
<dbReference type="KEGG" id="sax:USA300HOU_2092"/>
<dbReference type="HOGENOM" id="CLU_084338_1_3_9"/>
<dbReference type="GO" id="GO:0005886">
    <property type="term" value="C:plasma membrane"/>
    <property type="evidence" value="ECO:0007669"/>
    <property type="project" value="UniProtKB-SubCell"/>
</dbReference>
<dbReference type="GO" id="GO:0045259">
    <property type="term" value="C:proton-transporting ATP synthase complex"/>
    <property type="evidence" value="ECO:0007669"/>
    <property type="project" value="UniProtKB-KW"/>
</dbReference>
<dbReference type="GO" id="GO:0005524">
    <property type="term" value="F:ATP binding"/>
    <property type="evidence" value="ECO:0007669"/>
    <property type="project" value="UniProtKB-UniRule"/>
</dbReference>
<dbReference type="GO" id="GO:0046933">
    <property type="term" value="F:proton-transporting ATP synthase activity, rotational mechanism"/>
    <property type="evidence" value="ECO:0007669"/>
    <property type="project" value="UniProtKB-UniRule"/>
</dbReference>
<dbReference type="CDD" id="cd12152">
    <property type="entry name" value="F1-ATPase_delta"/>
    <property type="match status" value="1"/>
</dbReference>
<dbReference type="FunFam" id="1.20.5.440:FF:000001">
    <property type="entry name" value="ATP synthase epsilon chain"/>
    <property type="match status" value="1"/>
</dbReference>
<dbReference type="FunFam" id="2.60.15.10:FF:000001">
    <property type="entry name" value="ATP synthase epsilon chain"/>
    <property type="match status" value="1"/>
</dbReference>
<dbReference type="Gene3D" id="1.20.5.440">
    <property type="entry name" value="ATP synthase delta/epsilon subunit, C-terminal domain"/>
    <property type="match status" value="1"/>
</dbReference>
<dbReference type="Gene3D" id="2.60.15.10">
    <property type="entry name" value="F0F1 ATP synthase delta/epsilon subunit, N-terminal"/>
    <property type="match status" value="1"/>
</dbReference>
<dbReference type="HAMAP" id="MF_00530">
    <property type="entry name" value="ATP_synth_epsil_bac"/>
    <property type="match status" value="1"/>
</dbReference>
<dbReference type="InterPro" id="IPR036794">
    <property type="entry name" value="ATP_F1_dsu/esu_C_sf"/>
</dbReference>
<dbReference type="InterPro" id="IPR001469">
    <property type="entry name" value="ATP_synth_F1_dsu/esu"/>
</dbReference>
<dbReference type="InterPro" id="IPR020546">
    <property type="entry name" value="ATP_synth_F1_dsu/esu_N"/>
</dbReference>
<dbReference type="InterPro" id="IPR020547">
    <property type="entry name" value="ATP_synth_F1_esu_C"/>
</dbReference>
<dbReference type="InterPro" id="IPR036771">
    <property type="entry name" value="ATPsynth_dsu/esu_N"/>
</dbReference>
<dbReference type="NCBIfam" id="TIGR01216">
    <property type="entry name" value="ATP_synt_epsi"/>
    <property type="match status" value="1"/>
</dbReference>
<dbReference type="NCBIfam" id="NF001846">
    <property type="entry name" value="PRK00571.1-3"/>
    <property type="match status" value="1"/>
</dbReference>
<dbReference type="NCBIfam" id="NF009980">
    <property type="entry name" value="PRK13446.1"/>
    <property type="match status" value="1"/>
</dbReference>
<dbReference type="PANTHER" id="PTHR13822">
    <property type="entry name" value="ATP SYNTHASE DELTA/EPSILON CHAIN"/>
    <property type="match status" value="1"/>
</dbReference>
<dbReference type="PANTHER" id="PTHR13822:SF10">
    <property type="entry name" value="ATP SYNTHASE EPSILON CHAIN, CHLOROPLASTIC"/>
    <property type="match status" value="1"/>
</dbReference>
<dbReference type="Pfam" id="PF00401">
    <property type="entry name" value="ATP-synt_DE"/>
    <property type="match status" value="1"/>
</dbReference>
<dbReference type="Pfam" id="PF02823">
    <property type="entry name" value="ATP-synt_DE_N"/>
    <property type="match status" value="1"/>
</dbReference>
<dbReference type="SUPFAM" id="SSF46604">
    <property type="entry name" value="Epsilon subunit of F1F0-ATP synthase C-terminal domain"/>
    <property type="match status" value="1"/>
</dbReference>
<dbReference type="SUPFAM" id="SSF51344">
    <property type="entry name" value="Epsilon subunit of F1F0-ATP synthase N-terminal domain"/>
    <property type="match status" value="1"/>
</dbReference>
<accession>A8Z500</accession>
<reference key="1">
    <citation type="journal article" date="2007" name="BMC Microbiol.">
        <title>Subtle genetic changes enhance virulence of methicillin resistant and sensitive Staphylococcus aureus.</title>
        <authorList>
            <person name="Highlander S.K."/>
            <person name="Hulten K.G."/>
            <person name="Qin X."/>
            <person name="Jiang H."/>
            <person name="Yerrapragada S."/>
            <person name="Mason E.O. Jr."/>
            <person name="Shang Y."/>
            <person name="Williams T.M."/>
            <person name="Fortunov R.M."/>
            <person name="Liu Y."/>
            <person name="Igboeli O."/>
            <person name="Petrosino J."/>
            <person name="Tirumalai M."/>
            <person name="Uzman A."/>
            <person name="Fox G.E."/>
            <person name="Cardenas A.M."/>
            <person name="Muzny D.M."/>
            <person name="Hemphill L."/>
            <person name="Ding Y."/>
            <person name="Dugan S."/>
            <person name="Blyth P.R."/>
            <person name="Buhay C.J."/>
            <person name="Dinh H.H."/>
            <person name="Hawes A.C."/>
            <person name="Holder M."/>
            <person name="Kovar C.L."/>
            <person name="Lee S.L."/>
            <person name="Liu W."/>
            <person name="Nazareth L.V."/>
            <person name="Wang Q."/>
            <person name="Zhou J."/>
            <person name="Kaplan S.L."/>
            <person name="Weinstock G.M."/>
        </authorList>
    </citation>
    <scope>NUCLEOTIDE SEQUENCE [LARGE SCALE GENOMIC DNA]</scope>
    <source>
        <strain>USA300 / TCH1516</strain>
    </source>
</reference>
<protein>
    <recommendedName>
        <fullName evidence="1">ATP synthase epsilon chain</fullName>
    </recommendedName>
    <alternativeName>
        <fullName evidence="1">ATP synthase F1 sector epsilon subunit</fullName>
    </alternativeName>
    <alternativeName>
        <fullName evidence="1">F-ATPase epsilon subunit</fullName>
    </alternativeName>
</protein>
<gene>
    <name evidence="1" type="primary">atpC</name>
    <name type="ordered locus">USA300HOU_2092</name>
</gene>
<name>ATPE_STAAT</name>
<sequence>MNTLNLDIVTPNGSVYNRDNVELVVMQTTAGEIGVMSGHIPTVAALKTGFVKVKFHDGTEYIAVSDGFVEVRKDKVSIIVQTAETAREIDVERAKLAKARAESHLENDDDNTDIHRAERALERANNRLRVAELK</sequence>